<accession>P56943</accession>
<dbReference type="BMRB" id="P56943"/>
<dbReference type="Proteomes" id="UP000694557">
    <property type="component" value="Unplaced"/>
</dbReference>
<dbReference type="GO" id="GO:0045202">
    <property type="term" value="C:synapse"/>
    <property type="evidence" value="ECO:0007669"/>
    <property type="project" value="GOC"/>
</dbReference>
<dbReference type="GO" id="GO:0030354">
    <property type="term" value="F:melanin-concentrating hormone activity"/>
    <property type="evidence" value="ECO:0007669"/>
    <property type="project" value="InterPro"/>
</dbReference>
<dbReference type="GO" id="GO:0031777">
    <property type="term" value="F:type 1 melanin-concentrating hormone receptor binding"/>
    <property type="evidence" value="ECO:0007669"/>
    <property type="project" value="TreeGrafter"/>
</dbReference>
<dbReference type="GO" id="GO:0007268">
    <property type="term" value="P:chemical synaptic transmission"/>
    <property type="evidence" value="ECO:0007669"/>
    <property type="project" value="InterPro"/>
</dbReference>
<dbReference type="GO" id="GO:0007218">
    <property type="term" value="P:neuropeptide signaling pathway"/>
    <property type="evidence" value="ECO:0007669"/>
    <property type="project" value="UniProtKB-KW"/>
</dbReference>
<dbReference type="InterPro" id="IPR005456">
    <property type="entry name" value="Prepro-melanin_conc_hormone"/>
</dbReference>
<dbReference type="PANTHER" id="PTHR12091">
    <property type="entry name" value="MELANIN-CONCENTRATING HORMONE"/>
    <property type="match status" value="1"/>
</dbReference>
<dbReference type="PANTHER" id="PTHR12091:SF0">
    <property type="entry name" value="PRO-MCH"/>
    <property type="match status" value="1"/>
</dbReference>
<dbReference type="Pfam" id="PF05824">
    <property type="entry name" value="Pro-MCH"/>
    <property type="match status" value="1"/>
</dbReference>
<dbReference type="PRINTS" id="PR01641">
    <property type="entry name" value="PROMCHFAMILY"/>
</dbReference>
<feature type="signal peptide" evidence="2">
    <location>
        <begin position="1"/>
        <end position="24"/>
    </location>
</feature>
<feature type="chain" id="PRO_0000019123" description="Pro-MCH 1">
    <location>
        <begin position="25"/>
        <end position="132"/>
    </location>
</feature>
<feature type="peptide" id="PRO_0000019124" description="Neuropeptide-glutamic acid-valine" evidence="2">
    <location>
        <begin position="101"/>
        <end position="113"/>
    </location>
</feature>
<feature type="peptide" id="PRO_0000019125" description="Melanin-concentrating hormone">
    <location>
        <begin position="116"/>
        <end position="132"/>
    </location>
</feature>
<feature type="disulfide bond" evidence="1">
    <location>
        <begin position="120"/>
        <end position="129"/>
    </location>
</feature>
<protein>
    <recommendedName>
        <fullName>Pro-MCH 1</fullName>
    </recommendedName>
    <component>
        <recommendedName>
            <fullName>Neuropeptide-glutamic acid-valine</fullName>
        </recommendedName>
        <alternativeName>
            <fullName>Neuropeptide E-V</fullName>
            <shortName>NEV</shortName>
        </alternativeName>
    </component>
    <component>
        <recommendedName>
            <fullName>Melanin-concentrating hormone</fullName>
            <shortName>MCH</shortName>
        </recommendedName>
    </component>
</protein>
<name>MCH1_ONCKI</name>
<evidence type="ECO:0000250" key="1"/>
<evidence type="ECO:0000255" key="2"/>
<evidence type="ECO:0000305" key="3"/>
<keyword id="KW-0165">Cleavage on pair of basic residues</keyword>
<keyword id="KW-1015">Disulfide bond</keyword>
<keyword id="KW-0372">Hormone</keyword>
<keyword id="KW-0527">Neuropeptide</keyword>
<keyword id="KW-1185">Reference proteome</keyword>
<keyword id="KW-0732">Signal</keyword>
<proteinExistence type="evidence at transcript level"/>
<comment type="function">
    <text>Plays a role in skin pigmentation by antagonizing the action of melanotropin alpha. Induces melanin concentration within the melanophores. May participate in the control of the hypothalamo-pituitary adrenal gland axis by inhibiting the release of ACTH.</text>
</comment>
<comment type="tissue specificity">
    <text>Pituitary gland. Produced in neurons of lateral basal hypothalamus which project both to the brain and to the neural lobe of the pituitary gland from where MCH is released.</text>
</comment>
<comment type="similarity">
    <text evidence="3">Belongs to the MCH family.</text>
</comment>
<reference key="1">
    <citation type="journal article" date="1991" name="J. Neuroendocrinol.">
        <title>Identification of a single melanin-concentrating hormone messenger ribonucleic acid in Coho salmon: structural relatedness with riobonucleic acid.</title>
        <authorList>
            <person name="Nahon J.-L."/>
            <person name="Presse F."/>
            <person name="Schoepfer R."/>
            <person name="Vale W."/>
        </authorList>
    </citation>
    <scope>NUCLEOTIDE SEQUENCE</scope>
</reference>
<sequence length="132" mass="14668">MRDSVLSVIFALALFLECYTPSMAIPMGKMEDTALEQDTLDSLLNESVADKNPDSVRSGSSKIIVLADSGMWKNLNRGLPLYKLKAAAAGLDRALTLDRREADQDLSPSISIVRRDTMRCMVGRVYRPCWEV</sequence>
<gene>
    <name type="primary">mch1</name>
</gene>
<organism>
    <name type="scientific">Oncorhynchus kisutch</name>
    <name type="common">Coho salmon</name>
    <name type="synonym">Salmo kisutch</name>
    <dbReference type="NCBI Taxonomy" id="8019"/>
    <lineage>
        <taxon>Eukaryota</taxon>
        <taxon>Metazoa</taxon>
        <taxon>Chordata</taxon>
        <taxon>Craniata</taxon>
        <taxon>Vertebrata</taxon>
        <taxon>Euteleostomi</taxon>
        <taxon>Actinopterygii</taxon>
        <taxon>Neopterygii</taxon>
        <taxon>Teleostei</taxon>
        <taxon>Protacanthopterygii</taxon>
        <taxon>Salmoniformes</taxon>
        <taxon>Salmonidae</taxon>
        <taxon>Salmoninae</taxon>
        <taxon>Oncorhynchus</taxon>
    </lineage>
</organism>